<feature type="chain" id="PRO_0000416501" description="Gem-associated protein 7 homolog">
    <location>
        <begin position="1"/>
        <end position="91"/>
    </location>
</feature>
<feature type="domain" description="Sm" evidence="1">
    <location>
        <begin position="18"/>
        <end position="86"/>
    </location>
</feature>
<gene>
    <name evidence="3" type="primary">gem7</name>
    <name evidence="5" type="synonym">new17</name>
    <name evidence="5" type="ORF">SPBC32F12.16</name>
</gene>
<proteinExistence type="evidence at transcript level"/>
<protein>
    <recommendedName>
        <fullName>Gem-associated protein 7 homolog</fullName>
    </recommendedName>
</protein>
<name>GEMI7_SCHPO</name>
<sequence length="91" mass="10336">MAENNKKSTAYIQRMRTLKFYQKMASARIPITVYLHDQREVKAEFGAIDSSESKLAVSNLQTDWGVINRAVIRTGDVVGIEYNLVQEEGEL</sequence>
<evidence type="ECO:0000255" key="1">
    <source>
        <dbReference type="PROSITE-ProRule" id="PRU01346"/>
    </source>
</evidence>
<evidence type="ECO:0000269" key="2">
    <source>
    </source>
</evidence>
<evidence type="ECO:0000303" key="3">
    <source>
    </source>
</evidence>
<evidence type="ECO:0000305" key="4"/>
<evidence type="ECO:0000312" key="5">
    <source>
        <dbReference type="PomBase" id="SPBC32F12.16"/>
    </source>
</evidence>
<organism>
    <name type="scientific">Schizosaccharomyces pombe (strain 972 / ATCC 24843)</name>
    <name type="common">Fission yeast</name>
    <dbReference type="NCBI Taxonomy" id="284812"/>
    <lineage>
        <taxon>Eukaryota</taxon>
        <taxon>Fungi</taxon>
        <taxon>Dikarya</taxon>
        <taxon>Ascomycota</taxon>
        <taxon>Taphrinomycotina</taxon>
        <taxon>Schizosaccharomycetes</taxon>
        <taxon>Schizosaccharomycetales</taxon>
        <taxon>Schizosaccharomycetaceae</taxon>
        <taxon>Schizosaccharomyces</taxon>
    </lineage>
</organism>
<reference key="1">
    <citation type="journal article" date="2002" name="Nature">
        <title>The genome sequence of Schizosaccharomyces pombe.</title>
        <authorList>
            <person name="Wood V."/>
            <person name="Gwilliam R."/>
            <person name="Rajandream M.A."/>
            <person name="Lyne M.H."/>
            <person name="Lyne R."/>
            <person name="Stewart A."/>
            <person name="Sgouros J.G."/>
            <person name="Peat N."/>
            <person name="Hayles J."/>
            <person name="Baker S.G."/>
            <person name="Basham D."/>
            <person name="Bowman S."/>
            <person name="Brooks K."/>
            <person name="Brown D."/>
            <person name="Brown S."/>
            <person name="Chillingworth T."/>
            <person name="Churcher C.M."/>
            <person name="Collins M."/>
            <person name="Connor R."/>
            <person name="Cronin A."/>
            <person name="Davis P."/>
            <person name="Feltwell T."/>
            <person name="Fraser A."/>
            <person name="Gentles S."/>
            <person name="Goble A."/>
            <person name="Hamlin N."/>
            <person name="Harris D.E."/>
            <person name="Hidalgo J."/>
            <person name="Hodgson G."/>
            <person name="Holroyd S."/>
            <person name="Hornsby T."/>
            <person name="Howarth S."/>
            <person name="Huckle E.J."/>
            <person name="Hunt S."/>
            <person name="Jagels K."/>
            <person name="James K.D."/>
            <person name="Jones L."/>
            <person name="Jones M."/>
            <person name="Leather S."/>
            <person name="McDonald S."/>
            <person name="McLean J."/>
            <person name="Mooney P."/>
            <person name="Moule S."/>
            <person name="Mungall K.L."/>
            <person name="Murphy L.D."/>
            <person name="Niblett D."/>
            <person name="Odell C."/>
            <person name="Oliver K."/>
            <person name="O'Neil S."/>
            <person name="Pearson D."/>
            <person name="Quail M.A."/>
            <person name="Rabbinowitsch E."/>
            <person name="Rutherford K.M."/>
            <person name="Rutter S."/>
            <person name="Saunders D."/>
            <person name="Seeger K."/>
            <person name="Sharp S."/>
            <person name="Skelton J."/>
            <person name="Simmonds M.N."/>
            <person name="Squares R."/>
            <person name="Squares S."/>
            <person name="Stevens K."/>
            <person name="Taylor K."/>
            <person name="Taylor R.G."/>
            <person name="Tivey A."/>
            <person name="Walsh S.V."/>
            <person name="Warren T."/>
            <person name="Whitehead S."/>
            <person name="Woodward J.R."/>
            <person name="Volckaert G."/>
            <person name="Aert R."/>
            <person name="Robben J."/>
            <person name="Grymonprez B."/>
            <person name="Weltjens I."/>
            <person name="Vanstreels E."/>
            <person name="Rieger M."/>
            <person name="Schaefer M."/>
            <person name="Mueller-Auer S."/>
            <person name="Gabel C."/>
            <person name="Fuchs M."/>
            <person name="Duesterhoeft A."/>
            <person name="Fritzc C."/>
            <person name="Holzer E."/>
            <person name="Moestl D."/>
            <person name="Hilbert H."/>
            <person name="Borzym K."/>
            <person name="Langer I."/>
            <person name="Beck A."/>
            <person name="Lehrach H."/>
            <person name="Reinhardt R."/>
            <person name="Pohl T.M."/>
            <person name="Eger P."/>
            <person name="Zimmermann W."/>
            <person name="Wedler H."/>
            <person name="Wambutt R."/>
            <person name="Purnelle B."/>
            <person name="Goffeau A."/>
            <person name="Cadieu E."/>
            <person name="Dreano S."/>
            <person name="Gloux S."/>
            <person name="Lelaure V."/>
            <person name="Mottier S."/>
            <person name="Galibert F."/>
            <person name="Aves S.J."/>
            <person name="Xiang Z."/>
            <person name="Hunt C."/>
            <person name="Moore K."/>
            <person name="Hurst S.M."/>
            <person name="Lucas M."/>
            <person name="Rochet M."/>
            <person name="Gaillardin C."/>
            <person name="Tallada V.A."/>
            <person name="Garzon A."/>
            <person name="Thode G."/>
            <person name="Daga R.R."/>
            <person name="Cruzado L."/>
            <person name="Jimenez J."/>
            <person name="Sanchez M."/>
            <person name="del Rey F."/>
            <person name="Benito J."/>
            <person name="Dominguez A."/>
            <person name="Revuelta J.L."/>
            <person name="Moreno S."/>
            <person name="Armstrong J."/>
            <person name="Forsburg S.L."/>
            <person name="Cerutti L."/>
            <person name="Lowe T."/>
            <person name="McCombie W.R."/>
            <person name="Paulsen I."/>
            <person name="Potashkin J."/>
            <person name="Shpakovski G.V."/>
            <person name="Ussery D."/>
            <person name="Barrell B.G."/>
            <person name="Nurse P."/>
        </authorList>
    </citation>
    <scope>NUCLEOTIDE SEQUENCE [LARGE SCALE GENOMIC DNA]</scope>
    <source>
        <strain>972 / ATCC 24843</strain>
    </source>
</reference>
<reference key="2">
    <citation type="journal article" date="2011" name="Genetics">
        <title>Augmented annotation of the Schizosaccharomyces pombe genome reveals additional genes required for growth and viability.</title>
        <authorList>
            <person name="Bitton D.A."/>
            <person name="Wood V."/>
            <person name="Scutt P.J."/>
            <person name="Grallert A."/>
            <person name="Yates T."/>
            <person name="Smith D.L."/>
            <person name="Hagan I.M."/>
            <person name="Miller C.J."/>
        </authorList>
    </citation>
    <scope>IDENTIFICATION</scope>
</reference>
<reference key="3">
    <citation type="journal article" date="2021" name="Nucleic Acids Res.">
        <title>Identification and structural analysis of the Schizosaccharomyces pombe SMN complex.</title>
        <authorList>
            <person name="Veepaschit J."/>
            <person name="Viswanathan A."/>
            <person name="Bordonne R."/>
            <person name="Grimm C."/>
            <person name="Fischer U."/>
        </authorList>
    </citation>
    <scope>FUNCTION</scope>
    <scope>IDENTIFICATION IN THE CORE SMN COMPLEX</scope>
    <scope>INTERACTION WITH GEM6 AND GEM8</scope>
    <scope>DISRUPTION PHENOTYPE</scope>
</reference>
<comment type="subunit">
    <text evidence="2">Part of the core SMN complex at least composed of smn1, yip11/gem2, gem6, gem7 and gem8 (PubMed:33754639). Interacts with gem6; the interaction is direct (PubMed:33754639). Interacts with gem8; the interaction is direct (PubMed:33754639).</text>
</comment>
<comment type="disruption phenotype">
    <text evidence="2">Inviable cell population.</text>
</comment>
<comment type="similarity">
    <text evidence="4">Belongs to the gemin-7 family.</text>
</comment>
<dbReference type="EMBL" id="CU329671">
    <property type="protein sequence ID" value="CCD31374.1"/>
    <property type="molecule type" value="Genomic_DNA"/>
</dbReference>
<dbReference type="RefSeq" id="XP_004001722.1">
    <property type="nucleotide sequence ID" value="XM_004001673.1"/>
</dbReference>
<dbReference type="SASBDB" id="G2TRR1"/>
<dbReference type="SMR" id="G2TRR1"/>
<dbReference type="BioGRID" id="4254144">
    <property type="interactions" value="4"/>
</dbReference>
<dbReference type="ComplexPortal" id="CPX-25739">
    <property type="entry name" value="Survival motor neuron complex"/>
</dbReference>
<dbReference type="FunCoup" id="G2TRR1">
    <property type="interactions" value="1"/>
</dbReference>
<dbReference type="STRING" id="284812.G2TRR1"/>
<dbReference type="PaxDb" id="4896-SPBC32F12.16.1"/>
<dbReference type="EnsemblFungi" id="SPBC32F12.16.1">
    <property type="protein sequence ID" value="SPBC32F12.16.1:pep"/>
    <property type="gene ID" value="SPBC32F12.16"/>
</dbReference>
<dbReference type="PomBase" id="SPBC32F12.16">
    <property type="gene designation" value="gem7"/>
</dbReference>
<dbReference type="VEuPathDB" id="FungiDB:SPBC32F12.16"/>
<dbReference type="eggNOG" id="ENOG502T172">
    <property type="taxonomic scope" value="Eukaryota"/>
</dbReference>
<dbReference type="HOGENOM" id="CLU_2428329_0_0_1"/>
<dbReference type="InParanoid" id="G2TRR1"/>
<dbReference type="OMA" id="SHLHTDW"/>
<dbReference type="PRO" id="PR:G2TRR1"/>
<dbReference type="Proteomes" id="UP000002485">
    <property type="component" value="Chromosome II"/>
</dbReference>
<dbReference type="GO" id="GO:0005634">
    <property type="term" value="C:nucleus"/>
    <property type="evidence" value="ECO:0000250"/>
    <property type="project" value="PomBase"/>
</dbReference>
<dbReference type="GO" id="GO:0120114">
    <property type="term" value="C:Sm-like protein family complex"/>
    <property type="evidence" value="ECO:0000318"/>
    <property type="project" value="GO_Central"/>
</dbReference>
<dbReference type="GO" id="GO:0032797">
    <property type="term" value="C:SMN complex"/>
    <property type="evidence" value="ECO:0000314"/>
    <property type="project" value="PomBase"/>
</dbReference>
<dbReference type="GO" id="GO:0003723">
    <property type="term" value="F:RNA binding"/>
    <property type="evidence" value="ECO:0007669"/>
    <property type="project" value="InterPro"/>
</dbReference>
<dbReference type="GO" id="GO:0000387">
    <property type="term" value="P:spliceosomal snRNP assembly"/>
    <property type="evidence" value="ECO:0000315"/>
    <property type="project" value="PomBase"/>
</dbReference>
<dbReference type="Gene3D" id="2.30.30.100">
    <property type="match status" value="1"/>
</dbReference>
<dbReference type="InterPro" id="IPR047575">
    <property type="entry name" value="Sm"/>
</dbReference>
<dbReference type="InterPro" id="IPR020338">
    <property type="entry name" value="SMN_gemin7"/>
</dbReference>
<dbReference type="PANTHER" id="PTHR14679">
    <property type="entry name" value="GEM-ASSOCIATED PROTEIN 7"/>
    <property type="match status" value="1"/>
</dbReference>
<dbReference type="PANTHER" id="PTHR14679:SF1">
    <property type="entry name" value="GEM-ASSOCIATED PROTEIN 7"/>
    <property type="match status" value="1"/>
</dbReference>
<dbReference type="Pfam" id="PF11095">
    <property type="entry name" value="Gemin7"/>
    <property type="match status" value="1"/>
</dbReference>
<dbReference type="PROSITE" id="PS52002">
    <property type="entry name" value="SM"/>
    <property type="match status" value="1"/>
</dbReference>
<keyword id="KW-0507">mRNA processing</keyword>
<keyword id="KW-0508">mRNA splicing</keyword>
<keyword id="KW-1185">Reference proteome</keyword>
<accession>G2TRR1</accession>